<name>Y489_RICBR</name>
<keyword id="KW-0040">ANK repeat</keyword>
<keyword id="KW-0677">Repeat</keyword>
<feature type="chain" id="PRO_0000280911" description="Putative ankyrin repeat protein RBE_0489">
    <location>
        <begin position="1"/>
        <end position="239"/>
    </location>
</feature>
<feature type="repeat" description="ANK 1">
    <location>
        <begin position="23"/>
        <end position="52"/>
    </location>
</feature>
<feature type="repeat" description="ANK 2">
    <location>
        <begin position="80"/>
        <end position="109"/>
    </location>
</feature>
<feature type="repeat" description="ANK 3">
    <location>
        <begin position="113"/>
        <end position="143"/>
    </location>
</feature>
<sequence>MVRVTEVVHTKKHHKHKKIPKLISSRNLFKAVEKNNIAGTKFLLEHGISPNATHPNDSIEYKSLHWIISKNGELIEIEVGIDTPLHIAANNGYTTVVKILLENGAFINARDSFGFTPLHSAIISSYKLSSIKLLLEYGTSLTLEIIDGYYRGKTPVGLLKKIGSKKDKKVVALRALLELEKLYRNKELDKIVKKTYIKEPHIKDFIKWKIEAEIPKFIKSNISFLNKHIKKNYLLLISF</sequence>
<organism>
    <name type="scientific">Rickettsia bellii (strain RML369-C)</name>
    <dbReference type="NCBI Taxonomy" id="336407"/>
    <lineage>
        <taxon>Bacteria</taxon>
        <taxon>Pseudomonadati</taxon>
        <taxon>Pseudomonadota</taxon>
        <taxon>Alphaproteobacteria</taxon>
        <taxon>Rickettsiales</taxon>
        <taxon>Rickettsiaceae</taxon>
        <taxon>Rickettsieae</taxon>
        <taxon>Rickettsia</taxon>
        <taxon>belli group</taxon>
    </lineage>
</organism>
<reference key="1">
    <citation type="journal article" date="2006" name="PLoS Genet.">
        <title>Genome sequence of Rickettsia bellii illuminates the role of amoebae in gene exchanges between intracellular pathogens.</title>
        <authorList>
            <person name="Ogata H."/>
            <person name="La Scola B."/>
            <person name="Audic S."/>
            <person name="Renesto P."/>
            <person name="Blanc G."/>
            <person name="Robert C."/>
            <person name="Fournier P.-E."/>
            <person name="Claverie J.-M."/>
            <person name="Raoult D."/>
        </authorList>
    </citation>
    <scope>NUCLEOTIDE SEQUENCE [LARGE SCALE GENOMIC DNA]</scope>
    <source>
        <strain>RML369-C</strain>
    </source>
</reference>
<gene>
    <name type="ordered locus">RBE_0489</name>
</gene>
<proteinExistence type="predicted"/>
<accession>Q1RJ94</accession>
<dbReference type="EMBL" id="CP000087">
    <property type="protein sequence ID" value="ABE04570.1"/>
    <property type="molecule type" value="Genomic_DNA"/>
</dbReference>
<dbReference type="RefSeq" id="WP_011477161.1">
    <property type="nucleotide sequence ID" value="NC_007940.1"/>
</dbReference>
<dbReference type="SMR" id="Q1RJ94"/>
<dbReference type="KEGG" id="rbe:RBE_0489"/>
<dbReference type="eggNOG" id="COG0666">
    <property type="taxonomic scope" value="Bacteria"/>
</dbReference>
<dbReference type="HOGENOM" id="CLU_1160367_0_0_5"/>
<dbReference type="OrthoDB" id="7390289at2"/>
<dbReference type="Proteomes" id="UP000001951">
    <property type="component" value="Chromosome"/>
</dbReference>
<dbReference type="Gene3D" id="1.25.40.20">
    <property type="entry name" value="Ankyrin repeat-containing domain"/>
    <property type="match status" value="1"/>
</dbReference>
<dbReference type="InterPro" id="IPR002110">
    <property type="entry name" value="Ankyrin_rpt"/>
</dbReference>
<dbReference type="InterPro" id="IPR036770">
    <property type="entry name" value="Ankyrin_rpt-contain_sf"/>
</dbReference>
<dbReference type="PANTHER" id="PTHR24171">
    <property type="entry name" value="ANKYRIN REPEAT DOMAIN-CONTAINING PROTEIN 39-RELATED"/>
    <property type="match status" value="1"/>
</dbReference>
<dbReference type="Pfam" id="PF12796">
    <property type="entry name" value="Ank_2"/>
    <property type="match status" value="1"/>
</dbReference>
<dbReference type="SMART" id="SM00248">
    <property type="entry name" value="ANK"/>
    <property type="match status" value="3"/>
</dbReference>
<dbReference type="SUPFAM" id="SSF48403">
    <property type="entry name" value="Ankyrin repeat"/>
    <property type="match status" value="1"/>
</dbReference>
<dbReference type="PROSITE" id="PS50297">
    <property type="entry name" value="ANK_REP_REGION"/>
    <property type="match status" value="1"/>
</dbReference>
<dbReference type="PROSITE" id="PS50088">
    <property type="entry name" value="ANK_REPEAT"/>
    <property type="match status" value="1"/>
</dbReference>
<protein>
    <recommendedName>
        <fullName>Putative ankyrin repeat protein RBE_0489</fullName>
    </recommendedName>
</protein>